<dbReference type="EC" id="2.5.1.16" evidence="1"/>
<dbReference type="EMBL" id="CP000653">
    <property type="protein sequence ID" value="ABP59356.1"/>
    <property type="molecule type" value="Genomic_DNA"/>
</dbReference>
<dbReference type="RefSeq" id="WP_012016077.1">
    <property type="nucleotide sequence ID" value="NC_009436.1"/>
</dbReference>
<dbReference type="SMR" id="A4W6M6"/>
<dbReference type="STRING" id="399742.Ent638_0669"/>
<dbReference type="KEGG" id="ent:Ent638_0669"/>
<dbReference type="eggNOG" id="COG0421">
    <property type="taxonomic scope" value="Bacteria"/>
</dbReference>
<dbReference type="HOGENOM" id="CLU_048199_1_0_6"/>
<dbReference type="OrthoDB" id="9793120at2"/>
<dbReference type="UniPathway" id="UPA00248">
    <property type="reaction ID" value="UER00314"/>
</dbReference>
<dbReference type="Proteomes" id="UP000000230">
    <property type="component" value="Chromosome"/>
</dbReference>
<dbReference type="GO" id="GO:0005829">
    <property type="term" value="C:cytosol"/>
    <property type="evidence" value="ECO:0007669"/>
    <property type="project" value="TreeGrafter"/>
</dbReference>
<dbReference type="GO" id="GO:0004766">
    <property type="term" value="F:spermidine synthase activity"/>
    <property type="evidence" value="ECO:0007669"/>
    <property type="project" value="UniProtKB-UniRule"/>
</dbReference>
<dbReference type="GO" id="GO:0008295">
    <property type="term" value="P:spermidine biosynthetic process"/>
    <property type="evidence" value="ECO:0007669"/>
    <property type="project" value="UniProtKB-UniRule"/>
</dbReference>
<dbReference type="CDD" id="cd02440">
    <property type="entry name" value="AdoMet_MTases"/>
    <property type="match status" value="1"/>
</dbReference>
<dbReference type="FunFam" id="2.30.140.10:FF:000002">
    <property type="entry name" value="Polyamine aminopropyltransferase"/>
    <property type="match status" value="1"/>
</dbReference>
<dbReference type="FunFam" id="3.40.50.150:FF:000026">
    <property type="entry name" value="Polyamine aminopropyltransferase"/>
    <property type="match status" value="1"/>
</dbReference>
<dbReference type="Gene3D" id="2.30.140.10">
    <property type="entry name" value="Spermidine synthase, tetramerisation domain"/>
    <property type="match status" value="1"/>
</dbReference>
<dbReference type="Gene3D" id="3.40.50.150">
    <property type="entry name" value="Vaccinia Virus protein VP39"/>
    <property type="match status" value="1"/>
</dbReference>
<dbReference type="HAMAP" id="MF_00198">
    <property type="entry name" value="Spermidine_synth"/>
    <property type="match status" value="1"/>
</dbReference>
<dbReference type="InterPro" id="IPR030374">
    <property type="entry name" value="PABS"/>
</dbReference>
<dbReference type="InterPro" id="IPR030373">
    <property type="entry name" value="PABS_CS"/>
</dbReference>
<dbReference type="InterPro" id="IPR029063">
    <property type="entry name" value="SAM-dependent_MTases_sf"/>
</dbReference>
<dbReference type="InterPro" id="IPR001045">
    <property type="entry name" value="Spermi_synthase"/>
</dbReference>
<dbReference type="InterPro" id="IPR035246">
    <property type="entry name" value="Spermidine_synt_N"/>
</dbReference>
<dbReference type="InterPro" id="IPR037163">
    <property type="entry name" value="Spermidine_synt_N_sf"/>
</dbReference>
<dbReference type="NCBIfam" id="NF037959">
    <property type="entry name" value="MFS_SpdSyn"/>
    <property type="match status" value="1"/>
</dbReference>
<dbReference type="NCBIfam" id="NF002010">
    <property type="entry name" value="PRK00811.1"/>
    <property type="match status" value="1"/>
</dbReference>
<dbReference type="NCBIfam" id="TIGR00417">
    <property type="entry name" value="speE"/>
    <property type="match status" value="1"/>
</dbReference>
<dbReference type="PANTHER" id="PTHR11558:SF11">
    <property type="entry name" value="SPERMIDINE SYNTHASE"/>
    <property type="match status" value="1"/>
</dbReference>
<dbReference type="PANTHER" id="PTHR11558">
    <property type="entry name" value="SPERMIDINE/SPERMINE SYNTHASE"/>
    <property type="match status" value="1"/>
</dbReference>
<dbReference type="Pfam" id="PF17284">
    <property type="entry name" value="Spermine_synt_N"/>
    <property type="match status" value="1"/>
</dbReference>
<dbReference type="Pfam" id="PF01564">
    <property type="entry name" value="Spermine_synth"/>
    <property type="match status" value="1"/>
</dbReference>
<dbReference type="SUPFAM" id="SSF53335">
    <property type="entry name" value="S-adenosyl-L-methionine-dependent methyltransferases"/>
    <property type="match status" value="1"/>
</dbReference>
<dbReference type="PROSITE" id="PS01330">
    <property type="entry name" value="PABS_1"/>
    <property type="match status" value="1"/>
</dbReference>
<dbReference type="PROSITE" id="PS51006">
    <property type="entry name" value="PABS_2"/>
    <property type="match status" value="1"/>
</dbReference>
<protein>
    <recommendedName>
        <fullName evidence="1">Polyamine aminopropyltransferase</fullName>
    </recommendedName>
    <alternativeName>
        <fullName evidence="1">Putrescine aminopropyltransferase</fullName>
        <shortName evidence="1">PAPT</shortName>
    </alternativeName>
    <alternativeName>
        <fullName evidence="1">Spermidine synthase</fullName>
        <shortName evidence="1">SPDS</shortName>
        <shortName evidence="1">SPDSY</shortName>
        <ecNumber evidence="1">2.5.1.16</ecNumber>
    </alternativeName>
</protein>
<keyword id="KW-0963">Cytoplasm</keyword>
<keyword id="KW-0620">Polyamine biosynthesis</keyword>
<keyword id="KW-0745">Spermidine biosynthesis</keyword>
<keyword id="KW-0808">Transferase</keyword>
<sequence length="289" mass="32511">MTDNTVWHETLHDQFGQYFAVDNVLYHEKTDHQDLIIFENAAFGRVMALDGVVQTTERDEFIYHEMMTHVPLLAHGHAKHVLIIGGGDGAMLREVSRHKSIETITMVEIDAGVVSFCRQYLPNHNAGSYDDPRFTLVIDDGVNFVNQSHQTFDVIISDCTDPIGPGATLFTSSFYEGCKRCLNPGGIFVAQNGVCFLQQDEAIDSHRKLSHYFGDVSFYQAAIPTYYGGIMTFAWATDNDVLRHLSTEIIAARFHQTHLKCRYYNPAVHTAAFALPQYLQDALSPKEVS</sequence>
<organism>
    <name type="scientific">Enterobacter sp. (strain 638)</name>
    <dbReference type="NCBI Taxonomy" id="399742"/>
    <lineage>
        <taxon>Bacteria</taxon>
        <taxon>Pseudomonadati</taxon>
        <taxon>Pseudomonadota</taxon>
        <taxon>Gammaproteobacteria</taxon>
        <taxon>Enterobacterales</taxon>
        <taxon>Enterobacteriaceae</taxon>
        <taxon>Enterobacter</taxon>
    </lineage>
</organism>
<reference key="1">
    <citation type="journal article" date="2010" name="PLoS Genet.">
        <title>Genome sequence of the plant growth promoting endophytic bacterium Enterobacter sp. 638.</title>
        <authorList>
            <person name="Taghavi S."/>
            <person name="van der Lelie D."/>
            <person name="Hoffman A."/>
            <person name="Zhang Y.B."/>
            <person name="Walla M.D."/>
            <person name="Vangronsveld J."/>
            <person name="Newman L."/>
            <person name="Monchy S."/>
        </authorList>
    </citation>
    <scope>NUCLEOTIDE SEQUENCE [LARGE SCALE GENOMIC DNA]</scope>
    <source>
        <strain>638</strain>
    </source>
</reference>
<name>SPEE_ENT38</name>
<feature type="chain" id="PRO_1000058552" description="Polyamine aminopropyltransferase">
    <location>
        <begin position="1"/>
        <end position="289"/>
    </location>
</feature>
<feature type="domain" description="PABS" evidence="1">
    <location>
        <begin position="5"/>
        <end position="238"/>
    </location>
</feature>
<feature type="active site" description="Proton acceptor" evidence="1">
    <location>
        <position position="158"/>
    </location>
</feature>
<feature type="binding site" evidence="1">
    <location>
        <position position="33"/>
    </location>
    <ligand>
        <name>S-methyl-5'-thioadenosine</name>
        <dbReference type="ChEBI" id="CHEBI:17509"/>
    </ligand>
</feature>
<feature type="binding site" evidence="1">
    <location>
        <position position="64"/>
    </location>
    <ligand>
        <name>spermidine</name>
        <dbReference type="ChEBI" id="CHEBI:57834"/>
    </ligand>
</feature>
<feature type="binding site" evidence="1">
    <location>
        <position position="88"/>
    </location>
    <ligand>
        <name>spermidine</name>
        <dbReference type="ChEBI" id="CHEBI:57834"/>
    </ligand>
</feature>
<feature type="binding site" evidence="1">
    <location>
        <position position="108"/>
    </location>
    <ligand>
        <name>S-methyl-5'-thioadenosine</name>
        <dbReference type="ChEBI" id="CHEBI:17509"/>
    </ligand>
</feature>
<feature type="binding site" evidence="1">
    <location>
        <begin position="140"/>
        <end position="141"/>
    </location>
    <ligand>
        <name>S-methyl-5'-thioadenosine</name>
        <dbReference type="ChEBI" id="CHEBI:17509"/>
    </ligand>
</feature>
<feature type="binding site" evidence="1">
    <location>
        <begin position="158"/>
        <end position="161"/>
    </location>
    <ligand>
        <name>spermidine</name>
        <dbReference type="ChEBI" id="CHEBI:57834"/>
    </ligand>
</feature>
<feature type="binding site" evidence="1">
    <location>
        <position position="165"/>
    </location>
    <ligand>
        <name>S-methyl-5'-thioadenosine</name>
        <dbReference type="ChEBI" id="CHEBI:17509"/>
    </ligand>
</feature>
<evidence type="ECO:0000255" key="1">
    <source>
        <dbReference type="HAMAP-Rule" id="MF_00198"/>
    </source>
</evidence>
<proteinExistence type="inferred from homology"/>
<comment type="function">
    <text evidence="1">Catalyzes the irreversible transfer of a propylamine group from the amino donor S-adenosylmethioninamine (decarboxy-AdoMet) to putrescine (1,4-diaminobutane) to yield spermidine.</text>
</comment>
<comment type="catalytic activity">
    <reaction evidence="1">
        <text>S-adenosyl 3-(methylsulfanyl)propylamine + putrescine = S-methyl-5'-thioadenosine + spermidine + H(+)</text>
        <dbReference type="Rhea" id="RHEA:12721"/>
        <dbReference type="ChEBI" id="CHEBI:15378"/>
        <dbReference type="ChEBI" id="CHEBI:17509"/>
        <dbReference type="ChEBI" id="CHEBI:57443"/>
        <dbReference type="ChEBI" id="CHEBI:57834"/>
        <dbReference type="ChEBI" id="CHEBI:326268"/>
        <dbReference type="EC" id="2.5.1.16"/>
    </reaction>
</comment>
<comment type="pathway">
    <text evidence="1">Amine and polyamine biosynthesis; spermidine biosynthesis; spermidine from putrescine: step 1/1.</text>
</comment>
<comment type="subunit">
    <text evidence="1">Homodimer or homotetramer.</text>
</comment>
<comment type="subcellular location">
    <subcellularLocation>
        <location evidence="1">Cytoplasm</location>
    </subcellularLocation>
</comment>
<comment type="similarity">
    <text evidence="1">Belongs to the spermidine/spermine synthase family.</text>
</comment>
<accession>A4W6M6</accession>
<gene>
    <name evidence="1" type="primary">speE</name>
    <name type="ordered locus">Ent638_0669</name>
</gene>